<feature type="chain" id="PRO_0000137130" description="Nucleoside diphosphate kinase homolog 7">
    <location>
        <begin position="1"/>
        <end position="376"/>
    </location>
</feature>
<feature type="domain" description="DM10" evidence="3">
    <location>
        <begin position="3"/>
        <end position="91"/>
    </location>
</feature>
<feature type="splice variant" id="VSP_040996" description="In isoform 2." evidence="9">
    <location>
        <begin position="1"/>
        <end position="36"/>
    </location>
</feature>
<feature type="mutagenesis site" description="Abolishes NME7 autophosphorylation." evidence="5">
    <original>K</original>
    <variation>A</variation>
    <location>
        <position position="173"/>
    </location>
</feature>
<feature type="mutagenesis site" description="Abolishes NME7 autophosphorylation." evidence="5">
    <original>H</original>
    <variation>F</variation>
    <location>
        <position position="206"/>
    </location>
</feature>
<feature type="mutagenesis site" description="Does not affect NME7 autophosphorylation. Reduces interaction with the gamma-tubulin ring complex." evidence="5">
    <original>R</original>
    <variation>A</variation>
    <location>
        <position position="322"/>
    </location>
</feature>
<feature type="mutagenesis site" description="Abolishes interaction with the gamma-tubulin ring complex." evidence="5">
    <original>R</original>
    <variation>E</variation>
    <location>
        <position position="322"/>
    </location>
</feature>
<feature type="mutagenesis site" description="Does not affect NME7 autophosphorylation." evidence="5">
    <original>H</original>
    <variation>F</variation>
    <location>
        <position position="355"/>
    </location>
</feature>
<keyword id="KW-0002">3D-structure</keyword>
<keyword id="KW-0025">Alternative splicing</keyword>
<keyword id="KW-0966">Cell projection</keyword>
<keyword id="KW-0969">Cilium</keyword>
<keyword id="KW-0963">Cytoplasm</keyword>
<keyword id="KW-0206">Cytoskeleton</keyword>
<keyword id="KW-0282">Flagellum</keyword>
<keyword id="KW-0378">Hydrolase</keyword>
<keyword id="KW-0418">Kinase</keyword>
<keyword id="KW-0539">Nucleus</keyword>
<keyword id="KW-1267">Proteomics identification</keyword>
<keyword id="KW-1185">Reference proteome</keyword>
<keyword id="KW-0808">Transferase</keyword>
<reference key="1">
    <citation type="submission" date="1999-05" db="EMBL/GenBank/DDBJ databases">
        <title>Human nm23-H7 (NME7) mRNA.</title>
        <authorList>
            <person name="Mehus J.G."/>
            <person name="Lambeth D.O."/>
        </authorList>
    </citation>
    <scope>NUCLEOTIDE SEQUENCE [MRNA] (ISOFORM 1)</scope>
</reference>
<reference key="2">
    <citation type="journal article" date="2004" name="Nat. Genet.">
        <title>Complete sequencing and characterization of 21,243 full-length human cDNAs.</title>
        <authorList>
            <person name="Ota T."/>
            <person name="Suzuki Y."/>
            <person name="Nishikawa T."/>
            <person name="Otsuki T."/>
            <person name="Sugiyama T."/>
            <person name="Irie R."/>
            <person name="Wakamatsu A."/>
            <person name="Hayashi K."/>
            <person name="Sato H."/>
            <person name="Nagai K."/>
            <person name="Kimura K."/>
            <person name="Makita H."/>
            <person name="Sekine M."/>
            <person name="Obayashi M."/>
            <person name="Nishi T."/>
            <person name="Shibahara T."/>
            <person name="Tanaka T."/>
            <person name="Ishii S."/>
            <person name="Yamamoto J."/>
            <person name="Saito K."/>
            <person name="Kawai Y."/>
            <person name="Isono Y."/>
            <person name="Nakamura Y."/>
            <person name="Nagahari K."/>
            <person name="Murakami K."/>
            <person name="Yasuda T."/>
            <person name="Iwayanagi T."/>
            <person name="Wagatsuma M."/>
            <person name="Shiratori A."/>
            <person name="Sudo H."/>
            <person name="Hosoiri T."/>
            <person name="Kaku Y."/>
            <person name="Kodaira H."/>
            <person name="Kondo H."/>
            <person name="Sugawara M."/>
            <person name="Takahashi M."/>
            <person name="Kanda K."/>
            <person name="Yokoi T."/>
            <person name="Furuya T."/>
            <person name="Kikkawa E."/>
            <person name="Omura Y."/>
            <person name="Abe K."/>
            <person name="Kamihara K."/>
            <person name="Katsuta N."/>
            <person name="Sato K."/>
            <person name="Tanikawa M."/>
            <person name="Yamazaki M."/>
            <person name="Ninomiya K."/>
            <person name="Ishibashi T."/>
            <person name="Yamashita H."/>
            <person name="Murakawa K."/>
            <person name="Fujimori K."/>
            <person name="Tanai H."/>
            <person name="Kimata M."/>
            <person name="Watanabe M."/>
            <person name="Hiraoka S."/>
            <person name="Chiba Y."/>
            <person name="Ishida S."/>
            <person name="Ono Y."/>
            <person name="Takiguchi S."/>
            <person name="Watanabe S."/>
            <person name="Yosida M."/>
            <person name="Hotuta T."/>
            <person name="Kusano J."/>
            <person name="Kanehori K."/>
            <person name="Takahashi-Fujii A."/>
            <person name="Hara H."/>
            <person name="Tanase T.-O."/>
            <person name="Nomura Y."/>
            <person name="Togiya S."/>
            <person name="Komai F."/>
            <person name="Hara R."/>
            <person name="Takeuchi K."/>
            <person name="Arita M."/>
            <person name="Imose N."/>
            <person name="Musashino K."/>
            <person name="Yuuki H."/>
            <person name="Oshima A."/>
            <person name="Sasaki N."/>
            <person name="Aotsuka S."/>
            <person name="Yoshikawa Y."/>
            <person name="Matsunawa H."/>
            <person name="Ichihara T."/>
            <person name="Shiohata N."/>
            <person name="Sano S."/>
            <person name="Moriya S."/>
            <person name="Momiyama H."/>
            <person name="Satoh N."/>
            <person name="Takami S."/>
            <person name="Terashima Y."/>
            <person name="Suzuki O."/>
            <person name="Nakagawa S."/>
            <person name="Senoh A."/>
            <person name="Mizoguchi H."/>
            <person name="Goto Y."/>
            <person name="Shimizu F."/>
            <person name="Wakebe H."/>
            <person name="Hishigaki H."/>
            <person name="Watanabe T."/>
            <person name="Sugiyama A."/>
            <person name="Takemoto M."/>
            <person name="Kawakami B."/>
            <person name="Yamazaki M."/>
            <person name="Watanabe K."/>
            <person name="Kumagai A."/>
            <person name="Itakura S."/>
            <person name="Fukuzumi Y."/>
            <person name="Fujimori Y."/>
            <person name="Komiyama M."/>
            <person name="Tashiro H."/>
            <person name="Tanigami A."/>
            <person name="Fujiwara T."/>
            <person name="Ono T."/>
            <person name="Yamada K."/>
            <person name="Fujii Y."/>
            <person name="Ozaki K."/>
            <person name="Hirao M."/>
            <person name="Ohmori Y."/>
            <person name="Kawabata A."/>
            <person name="Hikiji T."/>
            <person name="Kobatake N."/>
            <person name="Inagaki H."/>
            <person name="Ikema Y."/>
            <person name="Okamoto S."/>
            <person name="Okitani R."/>
            <person name="Kawakami T."/>
            <person name="Noguchi S."/>
            <person name="Itoh T."/>
            <person name="Shigeta K."/>
            <person name="Senba T."/>
            <person name="Matsumura K."/>
            <person name="Nakajima Y."/>
            <person name="Mizuno T."/>
            <person name="Morinaga M."/>
            <person name="Sasaki M."/>
            <person name="Togashi T."/>
            <person name="Oyama M."/>
            <person name="Hata H."/>
            <person name="Watanabe M."/>
            <person name="Komatsu T."/>
            <person name="Mizushima-Sugano J."/>
            <person name="Satoh T."/>
            <person name="Shirai Y."/>
            <person name="Takahashi Y."/>
            <person name="Nakagawa K."/>
            <person name="Okumura K."/>
            <person name="Nagase T."/>
            <person name="Nomura N."/>
            <person name="Kikuchi H."/>
            <person name="Masuho Y."/>
            <person name="Yamashita R."/>
            <person name="Nakai K."/>
            <person name="Yada T."/>
            <person name="Nakamura Y."/>
            <person name="Ohara O."/>
            <person name="Isogai T."/>
            <person name="Sugano S."/>
        </authorList>
    </citation>
    <scope>NUCLEOTIDE SEQUENCE [LARGE SCALE MRNA] (ISOFORMS 1 AND 2)</scope>
    <source>
        <tissue>Brain cortex</tissue>
        <tissue>Lung</tissue>
    </source>
</reference>
<reference key="3">
    <citation type="journal article" date="2006" name="Nature">
        <title>The DNA sequence and biological annotation of human chromosome 1.</title>
        <authorList>
            <person name="Gregory S.G."/>
            <person name="Barlow K.F."/>
            <person name="McLay K.E."/>
            <person name="Kaul R."/>
            <person name="Swarbreck D."/>
            <person name="Dunham A."/>
            <person name="Scott C.E."/>
            <person name="Howe K.L."/>
            <person name="Woodfine K."/>
            <person name="Spencer C.C.A."/>
            <person name="Jones M.C."/>
            <person name="Gillson C."/>
            <person name="Searle S."/>
            <person name="Zhou Y."/>
            <person name="Kokocinski F."/>
            <person name="McDonald L."/>
            <person name="Evans R."/>
            <person name="Phillips K."/>
            <person name="Atkinson A."/>
            <person name="Cooper R."/>
            <person name="Jones C."/>
            <person name="Hall R.E."/>
            <person name="Andrews T.D."/>
            <person name="Lloyd C."/>
            <person name="Ainscough R."/>
            <person name="Almeida J.P."/>
            <person name="Ambrose K.D."/>
            <person name="Anderson F."/>
            <person name="Andrew R.W."/>
            <person name="Ashwell R.I.S."/>
            <person name="Aubin K."/>
            <person name="Babbage A.K."/>
            <person name="Bagguley C.L."/>
            <person name="Bailey J."/>
            <person name="Beasley H."/>
            <person name="Bethel G."/>
            <person name="Bird C.P."/>
            <person name="Bray-Allen S."/>
            <person name="Brown J.Y."/>
            <person name="Brown A.J."/>
            <person name="Buckley D."/>
            <person name="Burton J."/>
            <person name="Bye J."/>
            <person name="Carder C."/>
            <person name="Chapman J.C."/>
            <person name="Clark S.Y."/>
            <person name="Clarke G."/>
            <person name="Clee C."/>
            <person name="Cobley V."/>
            <person name="Collier R.E."/>
            <person name="Corby N."/>
            <person name="Coville G.J."/>
            <person name="Davies J."/>
            <person name="Deadman R."/>
            <person name="Dunn M."/>
            <person name="Earthrowl M."/>
            <person name="Ellington A.G."/>
            <person name="Errington H."/>
            <person name="Frankish A."/>
            <person name="Frankland J."/>
            <person name="French L."/>
            <person name="Garner P."/>
            <person name="Garnett J."/>
            <person name="Gay L."/>
            <person name="Ghori M.R.J."/>
            <person name="Gibson R."/>
            <person name="Gilby L.M."/>
            <person name="Gillett W."/>
            <person name="Glithero R.J."/>
            <person name="Grafham D.V."/>
            <person name="Griffiths C."/>
            <person name="Griffiths-Jones S."/>
            <person name="Grocock R."/>
            <person name="Hammond S."/>
            <person name="Harrison E.S.I."/>
            <person name="Hart E."/>
            <person name="Haugen E."/>
            <person name="Heath P.D."/>
            <person name="Holmes S."/>
            <person name="Holt K."/>
            <person name="Howden P.J."/>
            <person name="Hunt A.R."/>
            <person name="Hunt S.E."/>
            <person name="Hunter G."/>
            <person name="Isherwood J."/>
            <person name="James R."/>
            <person name="Johnson C."/>
            <person name="Johnson D."/>
            <person name="Joy A."/>
            <person name="Kay M."/>
            <person name="Kershaw J.K."/>
            <person name="Kibukawa M."/>
            <person name="Kimberley A.M."/>
            <person name="King A."/>
            <person name="Knights A.J."/>
            <person name="Lad H."/>
            <person name="Laird G."/>
            <person name="Lawlor S."/>
            <person name="Leongamornlert D.A."/>
            <person name="Lloyd D.M."/>
            <person name="Loveland J."/>
            <person name="Lovell J."/>
            <person name="Lush M.J."/>
            <person name="Lyne R."/>
            <person name="Martin S."/>
            <person name="Mashreghi-Mohammadi M."/>
            <person name="Matthews L."/>
            <person name="Matthews N.S.W."/>
            <person name="McLaren S."/>
            <person name="Milne S."/>
            <person name="Mistry S."/>
            <person name="Moore M.J.F."/>
            <person name="Nickerson T."/>
            <person name="O'Dell C.N."/>
            <person name="Oliver K."/>
            <person name="Palmeiri A."/>
            <person name="Palmer S.A."/>
            <person name="Parker A."/>
            <person name="Patel D."/>
            <person name="Pearce A.V."/>
            <person name="Peck A.I."/>
            <person name="Pelan S."/>
            <person name="Phelps K."/>
            <person name="Phillimore B.J."/>
            <person name="Plumb R."/>
            <person name="Rajan J."/>
            <person name="Raymond C."/>
            <person name="Rouse G."/>
            <person name="Saenphimmachak C."/>
            <person name="Sehra H.K."/>
            <person name="Sheridan E."/>
            <person name="Shownkeen R."/>
            <person name="Sims S."/>
            <person name="Skuce C.D."/>
            <person name="Smith M."/>
            <person name="Steward C."/>
            <person name="Subramanian S."/>
            <person name="Sycamore N."/>
            <person name="Tracey A."/>
            <person name="Tromans A."/>
            <person name="Van Helmond Z."/>
            <person name="Wall M."/>
            <person name="Wallis J.M."/>
            <person name="White S."/>
            <person name="Whitehead S.L."/>
            <person name="Wilkinson J.E."/>
            <person name="Willey D.L."/>
            <person name="Williams H."/>
            <person name="Wilming L."/>
            <person name="Wray P.W."/>
            <person name="Wu Z."/>
            <person name="Coulson A."/>
            <person name="Vaudin M."/>
            <person name="Sulston J.E."/>
            <person name="Durbin R.M."/>
            <person name="Hubbard T."/>
            <person name="Wooster R."/>
            <person name="Dunham I."/>
            <person name="Carter N.P."/>
            <person name="McVean G."/>
            <person name="Ross M.T."/>
            <person name="Harrow J."/>
            <person name="Olson M.V."/>
            <person name="Beck S."/>
            <person name="Rogers J."/>
            <person name="Bentley D.R."/>
        </authorList>
    </citation>
    <scope>NUCLEOTIDE SEQUENCE [LARGE SCALE GENOMIC DNA]</scope>
</reference>
<reference key="4">
    <citation type="submission" date="2005-07" db="EMBL/GenBank/DDBJ databases">
        <authorList>
            <person name="Mural R.J."/>
            <person name="Istrail S."/>
            <person name="Sutton G.G."/>
            <person name="Florea L."/>
            <person name="Halpern A.L."/>
            <person name="Mobarry C.M."/>
            <person name="Lippert R."/>
            <person name="Walenz B."/>
            <person name="Shatkay H."/>
            <person name="Dew I."/>
            <person name="Miller J.R."/>
            <person name="Flanigan M.J."/>
            <person name="Edwards N.J."/>
            <person name="Bolanos R."/>
            <person name="Fasulo D."/>
            <person name="Halldorsson B.V."/>
            <person name="Hannenhalli S."/>
            <person name="Turner R."/>
            <person name="Yooseph S."/>
            <person name="Lu F."/>
            <person name="Nusskern D.R."/>
            <person name="Shue B.C."/>
            <person name="Zheng X.H."/>
            <person name="Zhong F."/>
            <person name="Delcher A.L."/>
            <person name="Huson D.H."/>
            <person name="Kravitz S.A."/>
            <person name="Mouchard L."/>
            <person name="Reinert K."/>
            <person name="Remington K.A."/>
            <person name="Clark A.G."/>
            <person name="Waterman M.S."/>
            <person name="Eichler E.E."/>
            <person name="Adams M.D."/>
            <person name="Hunkapiller M.W."/>
            <person name="Myers E.W."/>
            <person name="Venter J.C."/>
        </authorList>
    </citation>
    <scope>NUCLEOTIDE SEQUENCE [LARGE SCALE GENOMIC DNA]</scope>
</reference>
<reference key="5">
    <citation type="journal article" date="2004" name="Genome Res.">
        <title>The status, quality, and expansion of the NIH full-length cDNA project: the Mammalian Gene Collection (MGC).</title>
        <authorList>
            <consortium name="The MGC Project Team"/>
        </authorList>
    </citation>
    <scope>NUCLEOTIDE SEQUENCE [LARGE SCALE MRNA] (ISOFORM 1)</scope>
    <source>
        <tissue>Urinary bladder</tissue>
    </source>
</reference>
<reference key="6">
    <citation type="journal article" date="2003" name="Nature">
        <title>Proteomic characterization of the human centrosome by protein correlation profiling.</title>
        <authorList>
            <person name="Andersen J.S."/>
            <person name="Wilkinson C.J."/>
            <person name="Mayor T."/>
            <person name="Mortensen P."/>
            <person name="Nigg E.A."/>
            <person name="Mann M."/>
        </authorList>
    </citation>
    <scope>IDENTIFICATION BY MASS SPECTROMETRY</scope>
    <source>
        <tissue>Lymphoblast</tissue>
    </source>
</reference>
<reference key="7">
    <citation type="journal article" date="2005" name="Biochemistry">
        <title>Characterization of the 3' --&gt; 5' exonuclease activity found in human nucleoside diphosphate kinase 1 (NDK1) and several of its homologues.</title>
        <authorList>
            <person name="Yoon J.H."/>
            <person name="Singh P."/>
            <person name="Lee D.H."/>
            <person name="Qiu J."/>
            <person name="Cai S."/>
            <person name="O'Connor T.R."/>
            <person name="Chen Y."/>
            <person name="Shen B."/>
            <person name="Pfeifer G.P."/>
        </authorList>
    </citation>
    <scope>FUNCTION</scope>
    <scope>CATALYTIC ACTIVITY</scope>
</reference>
<reference key="8">
    <citation type="journal article" date="2014" name="Mol. Biol. Cell">
        <title>NME7 is a functional component of the gamma-tubulin ring complex.</title>
        <authorList>
            <person name="Liu P."/>
            <person name="Choi Y.K."/>
            <person name="Qi R.Z."/>
        </authorList>
    </citation>
    <scope>SUBCELLULAR LOCATION</scope>
    <scope>SUBUNIT</scope>
    <scope>FUNCTION</scope>
    <scope>CATALYTIC ACTIVITY</scope>
    <scope>DOMAIN</scope>
    <scope>MUTAGENESIS OF LYS-173; HIS-206; ARG-322 AND HIS-355</scope>
</reference>
<reference key="9">
    <citation type="journal article" date="2011" name="BMC Syst. Biol.">
        <title>Initial characterization of the human central proteome.</title>
        <authorList>
            <person name="Burkard T.R."/>
            <person name="Planyavsky M."/>
            <person name="Kaupe I."/>
            <person name="Breitwieser F.P."/>
            <person name="Buerckstuemmer T."/>
            <person name="Bennett K.L."/>
            <person name="Superti-Furga G."/>
            <person name="Colinge J."/>
        </authorList>
    </citation>
    <scope>IDENTIFICATION BY MASS SPECTROMETRY [LARGE SCALE ANALYSIS]</scope>
</reference>
<reference key="10">
    <citation type="journal article" date="2024" name="Nat. Commun.">
        <title>Uncovering structural themes across cilia microtubule inner proteins with implications for human cilia function.</title>
        <authorList>
            <person name="Andersen J.S."/>
            <person name="Vijayakumaran A."/>
            <person name="Godbehere C."/>
            <person name="Lorentzen E."/>
            <person name="Mennella V."/>
            <person name="Schou K.B."/>
        </authorList>
    </citation>
    <scope>SUBCELLULAR LOCATION</scope>
</reference>
<reference evidence="13" key="11">
    <citation type="journal article" date="2022" name="Proc. Natl. Acad. Sci. U.S.A.">
        <title>SPACA9 is a lumenal protein of human ciliary singlet and doublet microtubules.</title>
        <authorList>
            <person name="Gui M."/>
            <person name="Croft J.T."/>
            <person name="Zabeo D."/>
            <person name="Acharya V."/>
            <person name="Kollman J.M."/>
            <person name="Burgoyne T."/>
            <person name="Hoog J.L."/>
            <person name="Brown A."/>
        </authorList>
    </citation>
    <scope>STRUCTURE BY ELECTRON MICROSCOPY (3.60 ANGSTROMS)</scope>
    <scope>FUNCTION</scope>
    <scope>SUBCELLULAR LOCATION</scope>
    <scope>TISSUE SPECIFICITY</scope>
</reference>
<reference evidence="14" key="12">
    <citation type="journal article" date="2023" name="Nature">
        <title>Axonemal structures reveal mechanoregulatory and disease mechanisms.</title>
        <authorList>
            <person name="Walton T."/>
            <person name="Gui M."/>
            <person name="Velkova S."/>
            <person name="Fassad M.R."/>
            <person name="Hirst R.A."/>
            <person name="Haarman E."/>
            <person name="O'Callaghan C."/>
            <person name="Bottier M."/>
            <person name="Burgoyne T."/>
            <person name="Mitchison H.M."/>
            <person name="Brown A."/>
        </authorList>
    </citation>
    <scope>STRUCTURE BY ELECTRON MICROSCOPY (4.10 ANGSTROMS)</scope>
    <scope>SUBCELLULAR LOCATION</scope>
</reference>
<proteinExistence type="evidence at protein level"/>
<comment type="function">
    <text evidence="4 5 6">Possesses an intrinsic kinase activity (PubMed:24807905). Displays 3'-5' exonuclease activity with a preference for single-stranded DNA (PubMed:16313181). Does not seem to have nucleoside diphosphate kinase activity (PubMed:16313181, PubMed:24807905). Functional component of the gamma-tubulin ring complex, implicated in the regulation of the microtubule-nucleating activity of the gamma-tubulin ring complex in centrosomes, in a kinase activity-dependent manner (PubMed:24807905). Part of the dynein-decorated doublet microtubules (DMTs) in cilia axoneme, which is required for motile cilia beating (PubMed:36191189).</text>
</comment>
<comment type="subunit">
    <text evidence="2 5">Component of sperm flagellar doublet microtubules (By similarity). Component of the gamma-tubulin ring complex (PubMed:24807905).</text>
</comment>
<comment type="interaction">
    <interactant intactId="EBI-744782">
        <id>Q9Y5B8</id>
    </interactant>
    <interactant intactId="EBI-746752">
        <id>Q9Y2J4</id>
        <label>AMOTL2</label>
    </interactant>
    <organismsDiffer>false</organismsDiffer>
    <experiments>3</experiments>
</comment>
<comment type="interaction">
    <interactant intactId="EBI-744782">
        <id>Q9Y5B8</id>
    </interactant>
    <interactant intactId="EBI-750254">
        <id>Q9BRR9</id>
        <label>ARHGAP9</label>
    </interactant>
    <organismsDiffer>false</organismsDiffer>
    <experiments>3</experiments>
</comment>
<comment type="interaction">
    <interactant intactId="EBI-744782">
        <id>Q9Y5B8</id>
    </interactant>
    <interactant intactId="EBI-12012762">
        <id>Q96KE9-2</id>
        <label>BTBD6</label>
    </interactant>
    <organismsDiffer>false</organismsDiffer>
    <experiments>5</experiments>
</comment>
<comment type="interaction">
    <interactant intactId="EBI-744782">
        <id>Q9Y5B8</id>
    </interactant>
    <interactant intactId="EBI-3866279">
        <id>Q9BWT7</id>
        <label>CARD10</label>
    </interactant>
    <organismsDiffer>false</organismsDiffer>
    <experiments>3</experiments>
</comment>
<comment type="interaction">
    <interactant intactId="EBI-744782">
        <id>Q9Y5B8</id>
    </interactant>
    <interactant intactId="EBI-11524851">
        <id>Q8NA61-2</id>
        <label>CBY2</label>
    </interactant>
    <organismsDiffer>false</organismsDiffer>
    <experiments>3</experiments>
</comment>
<comment type="interaction">
    <interactant intactId="EBI-744782">
        <id>Q9Y5B8</id>
    </interactant>
    <interactant intactId="EBI-347573">
        <id>A6NC98</id>
        <label>CCDC88B</label>
    </interactant>
    <organismsDiffer>false</organismsDiffer>
    <experiments>3</experiments>
</comment>
<comment type="interaction">
    <interactant intactId="EBI-744782">
        <id>Q9Y5B8</id>
    </interactant>
    <interactant intactId="EBI-10175300">
        <id>Q8TD31-3</id>
        <label>CCHCR1</label>
    </interactant>
    <organismsDiffer>false</organismsDiffer>
    <experiments>6</experiments>
</comment>
<comment type="interaction">
    <interactant intactId="EBI-744782">
        <id>Q9Y5B8</id>
    </interactant>
    <interactant intactId="EBI-3438291">
        <id>O14613</id>
        <label>CDC42EP2</label>
    </interactant>
    <organismsDiffer>false</organismsDiffer>
    <experiments>6</experiments>
</comment>
<comment type="interaction">
    <interactant intactId="EBI-744782">
        <id>Q9Y5B8</id>
    </interactant>
    <interactant intactId="EBI-739498">
        <id>Q9P209</id>
        <label>CEP72</label>
    </interactant>
    <organismsDiffer>false</organismsDiffer>
    <experiments>12</experiments>
</comment>
<comment type="interaction">
    <interactant intactId="EBI-744782">
        <id>Q9Y5B8</id>
    </interactant>
    <interactant intactId="EBI-10247920">
        <id>Q5VU69</id>
        <label>CFAP141</label>
    </interactant>
    <organismsDiffer>false</organismsDiffer>
    <experiments>11</experiments>
</comment>
<comment type="interaction">
    <interactant intactId="EBI-744782">
        <id>Q9Y5B8</id>
    </interactant>
    <interactant intactId="EBI-742054">
        <id>Q96D03</id>
        <label>DDIT4L</label>
    </interactant>
    <organismsDiffer>false</organismsDiffer>
    <experiments>3</experiments>
</comment>
<comment type="interaction">
    <interactant intactId="EBI-744782">
        <id>Q9Y5B8</id>
    </interactant>
    <interactant intactId="EBI-11988027">
        <id>Q9NRI5-2</id>
        <label>DISC1</label>
    </interactant>
    <organismsDiffer>false</organismsDiffer>
    <experiments>3</experiments>
</comment>
<comment type="interaction">
    <interactant intactId="EBI-744782">
        <id>Q9Y5B8</id>
    </interactant>
    <interactant intactId="EBI-5235378">
        <id>Q6TDU7</id>
        <label>DNAI7</label>
    </interactant>
    <organismsDiffer>false</organismsDiffer>
    <experiments>3</experiments>
</comment>
<comment type="interaction">
    <interactant intactId="EBI-744782">
        <id>Q9Y5B8</id>
    </interactant>
    <interactant intactId="EBI-2349927">
        <id>Q5JST6</id>
        <label>EFHC2</label>
    </interactant>
    <organismsDiffer>false</organismsDiffer>
    <experiments>3</experiments>
</comment>
<comment type="interaction">
    <interactant intactId="EBI-744782">
        <id>Q9Y5B8</id>
    </interactant>
    <interactant intactId="EBI-744771">
        <id>O75344</id>
        <label>FKBP6</label>
    </interactant>
    <organismsDiffer>false</organismsDiffer>
    <experiments>4</experiments>
</comment>
<comment type="interaction">
    <interactant intactId="EBI-744782">
        <id>Q9Y5B8</id>
    </interactant>
    <interactant intactId="EBI-603643">
        <id>O75955</id>
        <label>FLOT1</label>
    </interactant>
    <organismsDiffer>false</organismsDiffer>
    <experiments>3</experiments>
</comment>
<comment type="interaction">
    <interactant intactId="EBI-744782">
        <id>Q9Y5B8</id>
    </interactant>
    <interactant intactId="EBI-744510">
        <id>P15407</id>
        <label>FOSL1</label>
    </interactant>
    <organismsDiffer>false</organismsDiffer>
    <experiments>9</experiments>
</comment>
<comment type="interaction">
    <interactant intactId="EBI-744782">
        <id>Q9Y5B8</id>
    </interactant>
    <interactant intactId="EBI-3893419">
        <id>P15408</id>
        <label>FOSL2</label>
    </interactant>
    <organismsDiffer>false</organismsDiffer>
    <experiments>3</experiments>
</comment>
<comment type="interaction">
    <interactant intactId="EBI-744782">
        <id>Q9Y5B8</id>
    </interactant>
    <interactant intactId="EBI-923440">
        <id>Q8WXI9</id>
        <label>GATAD2B</label>
    </interactant>
    <organismsDiffer>false</organismsDiffer>
    <experiments>3</experiments>
</comment>
<comment type="interaction">
    <interactant intactId="EBI-744782">
        <id>Q9Y5B8</id>
    </interactant>
    <interactant intactId="EBI-7251368">
        <id>Q9BZE0</id>
        <label>GLIS2</label>
    </interactant>
    <organismsDiffer>false</organismsDiffer>
    <experiments>3</experiments>
</comment>
<comment type="interaction">
    <interactant intactId="EBI-744782">
        <id>Q9Y5B8</id>
    </interactant>
    <interactant intactId="EBI-618309">
        <id>Q08379</id>
        <label>GOLGA2</label>
    </interactant>
    <organismsDiffer>false</organismsDiffer>
    <experiments>6</experiments>
</comment>
<comment type="interaction">
    <interactant intactId="EBI-744782">
        <id>Q9Y5B8</id>
    </interactant>
    <interactant intactId="EBI-19954058">
        <id>O15499</id>
        <label>GSC2</label>
    </interactant>
    <organismsDiffer>false</organismsDiffer>
    <experiments>3</experiments>
</comment>
<comment type="interaction">
    <interactant intactId="EBI-744782">
        <id>Q9Y5B8</id>
    </interactant>
    <interactant intactId="EBI-2558143">
        <id>Q9BT25</id>
        <label>HAUS8</label>
    </interactant>
    <organismsDiffer>false</organismsDiffer>
    <experiments>3</experiments>
</comment>
<comment type="interaction">
    <interactant intactId="EBI-744782">
        <id>Q9Y5B8</id>
    </interactant>
    <interactant intactId="EBI-11522367">
        <id>Q13422-7</id>
        <label>IKZF1</label>
    </interactant>
    <organismsDiffer>false</organismsDiffer>
    <experiments>6</experiments>
</comment>
<comment type="interaction">
    <interactant intactId="EBI-744782">
        <id>Q9Y5B8</id>
    </interactant>
    <interactant intactId="EBI-747204">
        <id>Q9UKT9</id>
        <label>IKZF3</label>
    </interactant>
    <organismsDiffer>false</organismsDiffer>
    <experiments>3</experiments>
</comment>
<comment type="interaction">
    <interactant intactId="EBI-744782">
        <id>Q9Y5B8</id>
    </interactant>
    <interactant intactId="EBI-6509505">
        <id>Q0VD86</id>
        <label>INCA1</label>
    </interactant>
    <organismsDiffer>false</organismsDiffer>
    <experiments>5</experiments>
</comment>
<comment type="interaction">
    <interactant intactId="EBI-744782">
        <id>Q9Y5B8</id>
    </interactant>
    <interactant intactId="EBI-18398632">
        <id>Q9ULR0-1</id>
        <label>ISY1</label>
    </interactant>
    <organismsDiffer>false</organismsDiffer>
    <experiments>3</experiments>
</comment>
<comment type="interaction">
    <interactant intactId="EBI-744782">
        <id>Q9Y5B8</id>
    </interactant>
    <interactant intactId="EBI-297888">
        <id>P05783</id>
        <label>KRT18</label>
    </interactant>
    <organismsDiffer>false</organismsDiffer>
    <experiments>4</experiments>
</comment>
<comment type="interaction">
    <interactant intactId="EBI-744782">
        <id>Q9Y5B8</id>
    </interactant>
    <interactant intactId="EBI-2949715">
        <id>O95678</id>
        <label>KRT75</label>
    </interactant>
    <organismsDiffer>false</organismsDiffer>
    <experiments>3</experiments>
</comment>
<comment type="interaction">
    <interactant intactId="EBI-744782">
        <id>Q9Y5B8</id>
    </interactant>
    <interactant intactId="EBI-739832">
        <id>Q8TBB1</id>
        <label>LNX1</label>
    </interactant>
    <organismsDiffer>false</organismsDiffer>
    <experiments>9</experiments>
</comment>
<comment type="interaction">
    <interactant intactId="EBI-744782">
        <id>Q9Y5B8</id>
    </interactant>
    <interactant intactId="EBI-394704">
        <id>Q9P086</id>
        <label>MED11</label>
    </interactant>
    <organismsDiffer>false</organismsDiffer>
    <experiments>3</experiments>
</comment>
<comment type="interaction">
    <interactant intactId="EBI-744782">
        <id>Q9Y5B8</id>
    </interactant>
    <interactant intactId="EBI-394659">
        <id>Q96HR3</id>
        <label>MED30</label>
    </interactant>
    <organismsDiffer>false</organismsDiffer>
    <experiments>5</experiments>
</comment>
<comment type="interaction">
    <interactant intactId="EBI-744782">
        <id>Q9Y5B8</id>
    </interactant>
    <interactant intactId="EBI-19944212">
        <id>A8MW99</id>
        <label>MEI4</label>
    </interactant>
    <organismsDiffer>false</organismsDiffer>
    <experiments>3</experiments>
</comment>
<comment type="interaction">
    <interactant intactId="EBI-744782">
        <id>Q9Y5B8</id>
    </interactant>
    <interactant intactId="EBI-16439278">
        <id>Q6FHY5</id>
        <label>MEOX2</label>
    </interactant>
    <organismsDiffer>false</organismsDiffer>
    <experiments>3</experiments>
</comment>
<comment type="interaction">
    <interactant intactId="EBI-744782">
        <id>Q9Y5B8</id>
    </interactant>
    <interactant intactId="EBI-296701">
        <id>Q9UBF9</id>
        <label>MYOT</label>
    </interactant>
    <organismsDiffer>false</organismsDiffer>
    <experiments>3</experiments>
</comment>
<comment type="interaction">
    <interactant intactId="EBI-744782">
        <id>Q9Y5B8</id>
    </interactant>
    <interactant intactId="EBI-8641936">
        <id>Q15742</id>
        <label>NAB2</label>
    </interactant>
    <organismsDiffer>false</organismsDiffer>
    <experiments>6</experiments>
</comment>
<comment type="interaction">
    <interactant intactId="EBI-744782">
        <id>Q9Y5B8</id>
    </interactant>
    <interactant intactId="EBI-10178578">
        <id>I6L9F6</id>
        <label>NEFL</label>
    </interactant>
    <organismsDiffer>false</organismsDiffer>
    <experiments>3</experiments>
</comment>
<comment type="interaction">
    <interactant intactId="EBI-744782">
        <id>Q9Y5B8</id>
    </interactant>
    <interactant intactId="EBI-475646">
        <id>P07196</id>
        <label>NEFL</label>
    </interactant>
    <organismsDiffer>false</organismsDiffer>
    <experiments>3</experiments>
</comment>
<comment type="interaction">
    <interactant intactId="EBI-744782">
        <id>Q9Y5B8</id>
    </interactant>
    <interactant intactId="EBI-1043728">
        <id>Q9UBC1</id>
        <label>NFKBIL1</label>
    </interactant>
    <organismsDiffer>false</organismsDiffer>
    <experiments>3</experiments>
</comment>
<comment type="interaction">
    <interactant intactId="EBI-744782">
        <id>Q9Y5B8</id>
    </interactant>
    <interactant intactId="EBI-740897">
        <id>Q9GZT8</id>
        <label>NIF3L1</label>
    </interactant>
    <organismsDiffer>false</organismsDiffer>
    <experiments>3</experiments>
</comment>
<comment type="interaction">
    <interactant intactId="EBI-744782">
        <id>Q9Y5B8</id>
    </interactant>
    <interactant intactId="EBI-744871">
        <id>O00746</id>
        <label>NME4</label>
    </interactant>
    <organismsDiffer>false</organismsDiffer>
    <experiments>3</experiments>
</comment>
<comment type="interaction">
    <interactant intactId="EBI-744782">
        <id>Q9Y5B8</id>
    </interactant>
    <interactant intactId="EBI-742084">
        <id>P49902</id>
        <label>NT5C2</label>
    </interactant>
    <organismsDiffer>false</organismsDiffer>
    <experiments>4</experiments>
</comment>
<comment type="interaction">
    <interactant intactId="EBI-744782">
        <id>Q9Y5B8</id>
    </interactant>
    <interactant intactId="EBI-716327">
        <id>O75665</id>
        <label>OFD1</label>
    </interactant>
    <organismsDiffer>false</organismsDiffer>
    <experiments>3</experiments>
</comment>
<comment type="interaction">
    <interactant intactId="EBI-744782">
        <id>Q9Y5B8</id>
    </interactant>
    <interactant intactId="EBI-10240813">
        <id>Q3KNR5</id>
        <label>PAX4</label>
    </interactant>
    <organismsDiffer>false</organismsDiffer>
    <experiments>3</experiments>
</comment>
<comment type="interaction">
    <interactant intactId="EBI-744782">
        <id>Q9Y5B8</id>
    </interactant>
    <interactant intactId="EBI-348567">
        <id>O75928-2</id>
        <label>PIAS2</label>
    </interactant>
    <organismsDiffer>false</organismsDiffer>
    <experiments>3</experiments>
</comment>
<comment type="interaction">
    <interactant intactId="EBI-744782">
        <id>Q9Y5B8</id>
    </interactant>
    <interactant intactId="EBI-79165">
        <id>Q9NRD5</id>
        <label>PICK1</label>
    </interactant>
    <organismsDiffer>false</organismsDiffer>
    <experiments>3</experiments>
</comment>
<comment type="interaction">
    <interactant intactId="EBI-744782">
        <id>Q9Y5B8</id>
    </interactant>
    <interactant intactId="EBI-12029004">
        <id>P78424</id>
        <label>POU6F2</label>
    </interactant>
    <organismsDiffer>false</organismsDiffer>
    <experiments>3</experiments>
</comment>
<comment type="interaction">
    <interactant intactId="EBI-744782">
        <id>Q9Y5B8</id>
    </interactant>
    <interactant intactId="EBI-11336487">
        <id>Q2NL68</id>
        <label>PROSER3</label>
    </interactant>
    <organismsDiffer>false</organismsDiffer>
    <experiments>5</experiments>
</comment>
<comment type="interaction">
    <interactant intactId="EBI-744782">
        <id>Q9Y5B8</id>
    </interactant>
    <interactant intactId="EBI-359352">
        <id>P25786</id>
        <label>PSMA1</label>
    </interactant>
    <organismsDiffer>false</organismsDiffer>
    <experiments>3</experiments>
</comment>
<comment type="interaction">
    <interactant intactId="EBI-744782">
        <id>Q9Y5B8</id>
    </interactant>
    <interactant intactId="EBI-307352">
        <id>Q04864</id>
        <label>REL</label>
    </interactant>
    <organismsDiffer>false</organismsDiffer>
    <experiments>3</experiments>
</comment>
<comment type="interaction">
    <interactant intactId="EBI-744782">
        <id>Q9Y5B8</id>
    </interactant>
    <interactant intactId="EBI-2952709">
        <id>Q92622</id>
        <label>RUBCN</label>
    </interactant>
    <organismsDiffer>false</organismsDiffer>
    <experiments>3</experiments>
</comment>
<comment type="interaction">
    <interactant intactId="EBI-744782">
        <id>Q9Y5B8</id>
    </interactant>
    <interactant intactId="EBI-308778">
        <id>A0MZ66</id>
        <label>SHTN1</label>
    </interactant>
    <organismsDiffer>false</organismsDiffer>
    <experiments>3</experiments>
</comment>
<comment type="interaction">
    <interactant intactId="EBI-744782">
        <id>Q9Y5B8</id>
    </interactant>
    <interactant intactId="EBI-12097232">
        <id>A0MZ66-4</id>
        <label>SHTN1</label>
    </interactant>
    <organismsDiffer>false</organismsDiffer>
    <experiments>3</experiments>
</comment>
<comment type="interaction">
    <interactant intactId="EBI-744782">
        <id>Q9Y5B8</id>
    </interactant>
    <interactant intactId="EBI-296723">
        <id>O95295</id>
        <label>SNAPIN</label>
    </interactant>
    <organismsDiffer>false</organismsDiffer>
    <experiments>3</experiments>
</comment>
<comment type="interaction">
    <interactant intactId="EBI-744782">
        <id>Q9Y5B8</id>
    </interactant>
    <interactant intactId="EBI-8099743">
        <id>Q86XE0</id>
        <label>SNX32</label>
    </interactant>
    <organismsDiffer>false</organismsDiffer>
    <experiments>5</experiments>
</comment>
<comment type="interaction">
    <interactant intactId="EBI-744782">
        <id>Q9Y5B8</id>
    </interactant>
    <interactant intactId="EBI-6872807">
        <id>Q8N0S2</id>
        <label>SYCE1</label>
    </interactant>
    <organismsDiffer>false</organismsDiffer>
    <experiments>6</experiments>
</comment>
<comment type="interaction">
    <interactant intactId="EBI-744782">
        <id>Q9Y5B8</id>
    </interactant>
    <interactant intactId="EBI-533224">
        <id>P15884</id>
        <label>TCF4</label>
    </interactant>
    <organismsDiffer>false</organismsDiffer>
    <experiments>3</experiments>
</comment>
<comment type="interaction">
    <interactant intactId="EBI-744782">
        <id>Q9Y5B8</id>
    </interactant>
    <interactant intactId="EBI-13636688">
        <id>P15884-3</id>
        <label>TCF4</label>
    </interactant>
    <organismsDiffer>false</organismsDiffer>
    <experiments>3</experiments>
</comment>
<comment type="interaction">
    <interactant intactId="EBI-744782">
        <id>Q9Y5B8</id>
    </interactant>
    <interactant intactId="EBI-740781">
        <id>Q9BT92</id>
        <label>TCHP</label>
    </interactant>
    <organismsDiffer>false</organismsDiffer>
    <experiments>12</experiments>
</comment>
<comment type="interaction">
    <interactant intactId="EBI-744782">
        <id>Q9Y5B8</id>
    </interactant>
    <interactant intactId="EBI-10180409">
        <id>Q969V4</id>
        <label>TEKT1</label>
    </interactant>
    <organismsDiffer>false</organismsDiffer>
    <experiments>5</experiments>
</comment>
<comment type="interaction">
    <interactant intactId="EBI-744782">
        <id>Q9Y5B8</id>
    </interactant>
    <interactant intactId="EBI-11139477">
        <id>Q96N21</id>
        <label>TEPSIN</label>
    </interactant>
    <organismsDiffer>false</organismsDiffer>
    <experiments>3</experiments>
</comment>
<comment type="interaction">
    <interactant intactId="EBI-744782">
        <id>Q9Y5B8</id>
    </interactant>
    <interactant intactId="EBI-745404">
        <id>Q9P2Z0</id>
        <label>THAP10</label>
    </interactant>
    <organismsDiffer>false</organismsDiffer>
    <experiments>3</experiments>
</comment>
<comment type="interaction">
    <interactant intactId="EBI-744782">
        <id>Q9Y5B8</id>
    </interactant>
    <interactant intactId="EBI-357849">
        <id>Q15025</id>
        <label>TNIP1</label>
    </interactant>
    <organismsDiffer>false</organismsDiffer>
    <experiments>8</experiments>
</comment>
<comment type="interaction">
    <interactant intactId="EBI-744782">
        <id>Q9Y5B8</id>
    </interactant>
    <interactant intactId="EBI-7746394">
        <id>P48788</id>
        <label>TNNI2</label>
    </interactant>
    <organismsDiffer>false</organismsDiffer>
    <experiments>3</experiments>
</comment>
<comment type="interaction">
    <interactant intactId="EBI-744782">
        <id>Q9Y5B8</id>
    </interactant>
    <interactant intactId="EBI-719493">
        <id>P14373</id>
        <label>TRIM27</label>
    </interactant>
    <organismsDiffer>false</organismsDiffer>
    <experiments>3</experiments>
</comment>
<comment type="interaction">
    <interactant intactId="EBI-744782">
        <id>Q9Y5B8</id>
    </interactant>
    <interactant intactId="EBI-17555779">
        <id>Q8IWZ4</id>
        <label>TRIM48</label>
    </interactant>
    <organismsDiffer>false</organismsDiffer>
    <experiments>3</experiments>
</comment>
<comment type="interaction">
    <interactant intactId="EBI-744782">
        <id>Q9Y5B8</id>
    </interactant>
    <interactant intactId="EBI-744864">
        <id>P10074</id>
        <label>ZBTB48</label>
    </interactant>
    <organismsDiffer>false</organismsDiffer>
    <experiments>6</experiments>
</comment>
<comment type="interaction">
    <interactant intactId="EBI-744782">
        <id>Q9Y5B8</id>
    </interactant>
    <interactant intactId="EBI-5657766">
        <id>P17027</id>
        <label>ZNF23</label>
    </interactant>
    <organismsDiffer>false</organismsDiffer>
    <experiments>3</experiments>
</comment>
<comment type="interaction">
    <interactant intactId="EBI-744782">
        <id>Q9Y5B8</id>
    </interactant>
    <interactant intactId="EBI-10252492">
        <id>Q6P1L6</id>
        <label>ZNF343</label>
    </interactant>
    <organismsDiffer>false</organismsDiffer>
    <experiments>3</experiments>
</comment>
<comment type="interaction">
    <interactant intactId="EBI-744782">
        <id>Q9Y5B8</id>
    </interactant>
    <interactant intactId="EBI-11035148">
        <id>Q8TF50</id>
        <label>ZNF526</label>
    </interactant>
    <organismsDiffer>false</organismsDiffer>
    <experiments>3</experiments>
</comment>
<comment type="interaction">
    <interactant intactId="EBI-744782">
        <id>Q9Y5B8</id>
    </interactant>
    <interactant intactId="EBI-4395669">
        <id>Q6ZNG0</id>
        <label>ZNF620</label>
    </interactant>
    <organismsDiffer>false</organismsDiffer>
    <experiments>3</experiments>
</comment>
<comment type="subcellular location">
    <subcellularLocation>
        <location evidence="5 8">Cytoplasm</location>
        <location evidence="5 8">Cytoskeleton</location>
        <location evidence="5 8">Microtubule organizing center</location>
        <location evidence="5 8">Centrosome</location>
    </subcellularLocation>
    <subcellularLocation>
        <location evidence="5">Nucleus</location>
    </subcellularLocation>
    <subcellularLocation>
        <location evidence="5">Cytoplasm</location>
    </subcellularLocation>
    <subcellularLocation>
        <location evidence="5">Cytoplasm</location>
        <location evidence="5">Cytoskeleton</location>
        <location evidence="5">Spindle</location>
    </subcellularLocation>
    <subcellularLocation>
        <location evidence="6 7">Cytoplasm</location>
        <location evidence="6 7">Cytoskeleton</location>
        <location evidence="6 7">Cilium axoneme</location>
    </subcellularLocation>
    <subcellularLocation>
        <location evidence="1">Cytoplasm</location>
        <location evidence="1">Cytoskeleton</location>
        <location evidence="1">Flagellum axoneme</location>
    </subcellularLocation>
    <subcellularLocation>
        <location evidence="8">Cell projection</location>
        <location evidence="8">Cilium</location>
    </subcellularLocation>
    <text evidence="5">Localizes to centrosomes through its assembly into gamma-tubulin ring complex. The centrosomal content of NME7 varies during the cell cycle, being highest in mitosis and lowest in early G1.</text>
</comment>
<comment type="alternative products">
    <event type="alternative splicing"/>
    <isoform>
        <id>Q9Y5B8-1</id>
        <name>1</name>
        <sequence type="displayed"/>
    </isoform>
    <isoform>
        <id>Q9Y5B8-2</id>
        <name>2</name>
        <sequence type="described" ref="VSP_040996"/>
    </isoform>
</comment>
<comment type="tissue specificity">
    <text evidence="6">Expressed in airway epithelial cells.</text>
</comment>
<comment type="domain">
    <text evidence="5">Contains 2 putative kinase domains (94-224 and 239-372 AA), the first one is involved in autophosphorylation and the other may be inactive.</text>
</comment>
<comment type="PTM">
    <text evidence="5">Undergoes autophosphorylation.</text>
</comment>
<comment type="similarity">
    <text evidence="11">Belongs to the NDK family.</text>
</comment>
<dbReference type="EC" id="3.1.-.-" evidence="4"/>
<dbReference type="EC" id="2.7.-.-" evidence="5"/>
<dbReference type="EMBL" id="AF153191">
    <property type="protein sequence ID" value="AAD34622.1"/>
    <property type="molecule type" value="mRNA"/>
</dbReference>
<dbReference type="EMBL" id="AK094513">
    <property type="protein sequence ID" value="BAG52881.1"/>
    <property type="molecule type" value="mRNA"/>
</dbReference>
<dbReference type="EMBL" id="AK290701">
    <property type="protein sequence ID" value="BAF83390.1"/>
    <property type="molecule type" value="mRNA"/>
</dbReference>
<dbReference type="EMBL" id="AL031726">
    <property type="status" value="NOT_ANNOTATED_CDS"/>
    <property type="molecule type" value="Genomic_DNA"/>
</dbReference>
<dbReference type="EMBL" id="Z99758">
    <property type="status" value="NOT_ANNOTATED_CDS"/>
    <property type="molecule type" value="Genomic_DNA"/>
</dbReference>
<dbReference type="EMBL" id="AL356852">
    <property type="status" value="NOT_ANNOTATED_CDS"/>
    <property type="molecule type" value="Genomic_DNA"/>
</dbReference>
<dbReference type="EMBL" id="CH471067">
    <property type="protein sequence ID" value="EAW90834.1"/>
    <property type="molecule type" value="Genomic_DNA"/>
</dbReference>
<dbReference type="EMBL" id="CH471067">
    <property type="protein sequence ID" value="EAW90835.1"/>
    <property type="molecule type" value="Genomic_DNA"/>
</dbReference>
<dbReference type="EMBL" id="BC006983">
    <property type="protein sequence ID" value="AAH06983.1"/>
    <property type="molecule type" value="mRNA"/>
</dbReference>
<dbReference type="CCDS" id="CCDS1277.1">
    <molecule id="Q9Y5B8-1"/>
</dbReference>
<dbReference type="CCDS" id="CCDS44274.1">
    <molecule id="Q9Y5B8-2"/>
</dbReference>
<dbReference type="RefSeq" id="NP_037462.1">
    <molecule id="Q9Y5B8-1"/>
    <property type="nucleotide sequence ID" value="NM_013330.5"/>
</dbReference>
<dbReference type="RefSeq" id="NP_932076.1">
    <molecule id="Q9Y5B8-2"/>
    <property type="nucleotide sequence ID" value="NM_197972.3"/>
</dbReference>
<dbReference type="PDB" id="7UNG">
    <property type="method" value="EM"/>
    <property type="resolution" value="3.60 A"/>
    <property type="chains" value="5/6=1-376"/>
</dbReference>
<dbReference type="PDB" id="8J07">
    <property type="method" value="EM"/>
    <property type="resolution" value="4.10 A"/>
    <property type="chains" value="4O/4P/4Q/4R=1-376"/>
</dbReference>
<dbReference type="PDBsum" id="7UNG"/>
<dbReference type="PDBsum" id="8J07"/>
<dbReference type="EMDB" id="EMD-26624"/>
<dbReference type="EMDB" id="EMD-35888"/>
<dbReference type="SMR" id="Q9Y5B8"/>
<dbReference type="BioGRID" id="118963">
    <property type="interactions" value="181"/>
</dbReference>
<dbReference type="FunCoup" id="Q9Y5B8">
    <property type="interactions" value="1188"/>
</dbReference>
<dbReference type="IntAct" id="Q9Y5B8">
    <property type="interactions" value="135"/>
</dbReference>
<dbReference type="MINT" id="Q9Y5B8"/>
<dbReference type="STRING" id="9606.ENSP00000356785"/>
<dbReference type="iPTMnet" id="Q9Y5B8"/>
<dbReference type="PhosphoSitePlus" id="Q9Y5B8"/>
<dbReference type="BioMuta" id="NME7"/>
<dbReference type="DMDM" id="12230353"/>
<dbReference type="jPOST" id="Q9Y5B8"/>
<dbReference type="MassIVE" id="Q9Y5B8"/>
<dbReference type="PaxDb" id="9606-ENSP00000356785"/>
<dbReference type="PeptideAtlas" id="Q9Y5B8"/>
<dbReference type="ProteomicsDB" id="86336">
    <molecule id="Q9Y5B8-1"/>
</dbReference>
<dbReference type="ProteomicsDB" id="86337">
    <molecule id="Q9Y5B8-2"/>
</dbReference>
<dbReference type="Pumba" id="Q9Y5B8"/>
<dbReference type="Antibodypedia" id="34356">
    <property type="antibodies" value="158 antibodies from 26 providers"/>
</dbReference>
<dbReference type="DNASU" id="29922"/>
<dbReference type="Ensembl" id="ENST00000367811.8">
    <molecule id="Q9Y5B8-1"/>
    <property type="protein sequence ID" value="ENSP00000356785.3"/>
    <property type="gene ID" value="ENSG00000143156.14"/>
</dbReference>
<dbReference type="Ensembl" id="ENST00000472647.5">
    <molecule id="Q9Y5B8-2"/>
    <property type="protein sequence ID" value="ENSP00000433341.1"/>
    <property type="gene ID" value="ENSG00000143156.14"/>
</dbReference>
<dbReference type="GeneID" id="29922"/>
<dbReference type="KEGG" id="hsa:29922"/>
<dbReference type="MANE-Select" id="ENST00000367811.8">
    <property type="protein sequence ID" value="ENSP00000356785.3"/>
    <property type="RefSeq nucleotide sequence ID" value="NM_013330.5"/>
    <property type="RefSeq protein sequence ID" value="NP_037462.1"/>
</dbReference>
<dbReference type="UCSC" id="uc001gft.5">
    <molecule id="Q9Y5B8-1"/>
    <property type="organism name" value="human"/>
</dbReference>
<dbReference type="AGR" id="HGNC:20461"/>
<dbReference type="CTD" id="29922"/>
<dbReference type="DisGeNET" id="29922"/>
<dbReference type="GeneCards" id="NME7"/>
<dbReference type="HGNC" id="HGNC:20461">
    <property type="gene designation" value="NME7"/>
</dbReference>
<dbReference type="HPA" id="ENSG00000143156">
    <property type="expression patterns" value="Low tissue specificity"/>
</dbReference>
<dbReference type="MalaCards" id="NME7"/>
<dbReference type="MIM" id="613465">
    <property type="type" value="gene"/>
</dbReference>
<dbReference type="neXtProt" id="NX_Q9Y5B8"/>
<dbReference type="OpenTargets" id="ENSG00000143156"/>
<dbReference type="Orphanet" id="101063">
    <property type="disease" value="Situs inversus totalis"/>
</dbReference>
<dbReference type="PharmGKB" id="PA134962167"/>
<dbReference type="VEuPathDB" id="HostDB:ENSG00000143156"/>
<dbReference type="eggNOG" id="KOG0888">
    <property type="taxonomic scope" value="Eukaryota"/>
</dbReference>
<dbReference type="GeneTree" id="ENSGT00940000158946"/>
<dbReference type="HOGENOM" id="CLU_060216_3_1_1"/>
<dbReference type="InParanoid" id="Q9Y5B8"/>
<dbReference type="OMA" id="VCMCLEI"/>
<dbReference type="OrthoDB" id="270127at2759"/>
<dbReference type="PAN-GO" id="Q9Y5B8">
    <property type="GO annotations" value="1 GO annotation based on evolutionary models"/>
</dbReference>
<dbReference type="PhylomeDB" id="Q9Y5B8"/>
<dbReference type="TreeFam" id="TF106374"/>
<dbReference type="PathwayCommons" id="Q9Y5B8"/>
<dbReference type="Reactome" id="R-HSA-380270">
    <property type="pathway name" value="Recruitment of mitotic centrosome proteins and complexes"/>
</dbReference>
<dbReference type="Reactome" id="R-HSA-380320">
    <property type="pathway name" value="Recruitment of NuMA to mitotic centrosomes"/>
</dbReference>
<dbReference type="SignaLink" id="Q9Y5B8"/>
<dbReference type="BioGRID-ORCS" id="29922">
    <property type="hits" value="11 hits in 1154 CRISPR screens"/>
</dbReference>
<dbReference type="ChiTaRS" id="NME7">
    <property type="organism name" value="human"/>
</dbReference>
<dbReference type="GenomeRNAi" id="29922"/>
<dbReference type="Pharos" id="Q9Y5B8">
    <property type="development level" value="Tbio"/>
</dbReference>
<dbReference type="PRO" id="PR:Q9Y5B8"/>
<dbReference type="Proteomes" id="UP000005640">
    <property type="component" value="Chromosome 1"/>
</dbReference>
<dbReference type="RNAct" id="Q9Y5B8">
    <property type="molecule type" value="protein"/>
</dbReference>
<dbReference type="Bgee" id="ENSG00000143156">
    <property type="expression patterns" value="Expressed in cerebellar vermis and 204 other cell types or tissues"/>
</dbReference>
<dbReference type="ExpressionAtlas" id="Q9Y5B8">
    <property type="expression patterns" value="baseline and differential"/>
</dbReference>
<dbReference type="GO" id="GO:0160111">
    <property type="term" value="C:axonemal A tubule inner sheath"/>
    <property type="evidence" value="ECO:0000250"/>
    <property type="project" value="UniProtKB"/>
</dbReference>
<dbReference type="GO" id="GO:0005879">
    <property type="term" value="C:axonemal microtubule"/>
    <property type="evidence" value="ECO:0000314"/>
    <property type="project" value="UniProtKB"/>
</dbReference>
<dbReference type="GO" id="GO:0005813">
    <property type="term" value="C:centrosome"/>
    <property type="evidence" value="ECO:0000314"/>
    <property type="project" value="UniProtKB"/>
</dbReference>
<dbReference type="GO" id="GO:0036064">
    <property type="term" value="C:ciliary basal body"/>
    <property type="evidence" value="ECO:0007669"/>
    <property type="project" value="Ensembl"/>
</dbReference>
<dbReference type="GO" id="GO:0005929">
    <property type="term" value="C:cilium"/>
    <property type="evidence" value="ECO:0000314"/>
    <property type="project" value="UniProtKB"/>
</dbReference>
<dbReference type="GO" id="GO:0005737">
    <property type="term" value="C:cytoplasm"/>
    <property type="evidence" value="ECO:0000314"/>
    <property type="project" value="UniProtKB"/>
</dbReference>
<dbReference type="GO" id="GO:0005829">
    <property type="term" value="C:cytosol"/>
    <property type="evidence" value="ECO:0000314"/>
    <property type="project" value="HPA"/>
</dbReference>
<dbReference type="GO" id="GO:0005576">
    <property type="term" value="C:extracellular region"/>
    <property type="evidence" value="ECO:0007669"/>
    <property type="project" value="GOC"/>
</dbReference>
<dbReference type="GO" id="GO:0000931">
    <property type="term" value="C:gamma-tubulin ring complex"/>
    <property type="evidence" value="ECO:0000314"/>
    <property type="project" value="UniProtKB"/>
</dbReference>
<dbReference type="GO" id="GO:0005654">
    <property type="term" value="C:nucleoplasm"/>
    <property type="evidence" value="ECO:0000314"/>
    <property type="project" value="HPA"/>
</dbReference>
<dbReference type="GO" id="GO:0005634">
    <property type="term" value="C:nucleus"/>
    <property type="evidence" value="ECO:0000314"/>
    <property type="project" value="UniProtKB"/>
</dbReference>
<dbReference type="GO" id="GO:0005886">
    <property type="term" value="C:plasma membrane"/>
    <property type="evidence" value="ECO:0007669"/>
    <property type="project" value="GOC"/>
</dbReference>
<dbReference type="GO" id="GO:0036126">
    <property type="term" value="C:sperm flagellum"/>
    <property type="evidence" value="ECO:0000250"/>
    <property type="project" value="UniProtKB"/>
</dbReference>
<dbReference type="GO" id="GO:0005819">
    <property type="term" value="C:spindle"/>
    <property type="evidence" value="ECO:0007669"/>
    <property type="project" value="UniProtKB-SubCell"/>
</dbReference>
<dbReference type="GO" id="GO:0008408">
    <property type="term" value="F:3'-5' exonuclease activity"/>
    <property type="evidence" value="ECO:0000314"/>
    <property type="project" value="UniProtKB"/>
</dbReference>
<dbReference type="GO" id="GO:0005524">
    <property type="term" value="F:ATP binding"/>
    <property type="evidence" value="ECO:0007669"/>
    <property type="project" value="InterPro"/>
</dbReference>
<dbReference type="GO" id="GO:0004672">
    <property type="term" value="F:protein kinase activity"/>
    <property type="evidence" value="ECO:0000315"/>
    <property type="project" value="UniProtKB"/>
</dbReference>
<dbReference type="GO" id="GO:0007420">
    <property type="term" value="P:brain development"/>
    <property type="evidence" value="ECO:0007669"/>
    <property type="project" value="Ensembl"/>
</dbReference>
<dbReference type="GO" id="GO:1990830">
    <property type="term" value="P:cellular response to leukemia inhibitory factor"/>
    <property type="evidence" value="ECO:0007669"/>
    <property type="project" value="Ensembl"/>
</dbReference>
<dbReference type="GO" id="GO:0006241">
    <property type="term" value="P:CTP biosynthetic process"/>
    <property type="evidence" value="ECO:0007669"/>
    <property type="project" value="InterPro"/>
</dbReference>
<dbReference type="GO" id="GO:0007368">
    <property type="term" value="P:determination of left/right symmetry"/>
    <property type="evidence" value="ECO:0007669"/>
    <property type="project" value="Ensembl"/>
</dbReference>
<dbReference type="GO" id="GO:0003351">
    <property type="term" value="P:epithelial cilium movement involved in extracellular fluid movement"/>
    <property type="evidence" value="ECO:0007669"/>
    <property type="project" value="Ensembl"/>
</dbReference>
<dbReference type="GO" id="GO:0030317">
    <property type="term" value="P:flagellated sperm motility"/>
    <property type="evidence" value="ECO:0000250"/>
    <property type="project" value="UniProtKB"/>
</dbReference>
<dbReference type="GO" id="GO:0006183">
    <property type="term" value="P:GTP biosynthetic process"/>
    <property type="evidence" value="ECO:0007669"/>
    <property type="project" value="InterPro"/>
</dbReference>
<dbReference type="GO" id="GO:0042073">
    <property type="term" value="P:intraciliary transport"/>
    <property type="evidence" value="ECO:0007669"/>
    <property type="project" value="Ensembl"/>
</dbReference>
<dbReference type="GO" id="GO:0043113">
    <property type="term" value="P:receptor clustering"/>
    <property type="evidence" value="ECO:0007669"/>
    <property type="project" value="Ensembl"/>
</dbReference>
<dbReference type="GO" id="GO:0010968">
    <property type="term" value="P:regulation of microtubule nucleation"/>
    <property type="evidence" value="ECO:0000315"/>
    <property type="project" value="UniProtKB"/>
</dbReference>
<dbReference type="GO" id="GO:0006228">
    <property type="term" value="P:UTP biosynthetic process"/>
    <property type="evidence" value="ECO:0007669"/>
    <property type="project" value="InterPro"/>
</dbReference>
<dbReference type="CDD" id="cd04415">
    <property type="entry name" value="NDPk7A"/>
    <property type="match status" value="1"/>
</dbReference>
<dbReference type="CDD" id="cd04412">
    <property type="entry name" value="NDPk7B"/>
    <property type="match status" value="1"/>
</dbReference>
<dbReference type="FunFam" id="2.30.29.170:FF:000005">
    <property type="entry name" value="Nucleoside diphosphate kinase 7"/>
    <property type="match status" value="1"/>
</dbReference>
<dbReference type="FunFam" id="3.30.70.141:FF:000004">
    <property type="entry name" value="Nucleoside diphosphate kinase 7"/>
    <property type="match status" value="1"/>
</dbReference>
<dbReference type="FunFam" id="3.30.70.141:FF:000010">
    <property type="entry name" value="Nucleoside diphosphate kinase 7"/>
    <property type="match status" value="1"/>
</dbReference>
<dbReference type="Gene3D" id="2.30.29.170">
    <property type="match status" value="1"/>
</dbReference>
<dbReference type="Gene3D" id="3.30.70.141">
    <property type="entry name" value="Nucleoside diphosphate kinase-like domain"/>
    <property type="match status" value="2"/>
</dbReference>
<dbReference type="InterPro" id="IPR006602">
    <property type="entry name" value="DM10_dom"/>
</dbReference>
<dbReference type="InterPro" id="IPR034907">
    <property type="entry name" value="NDK-like_dom"/>
</dbReference>
<dbReference type="InterPro" id="IPR036850">
    <property type="entry name" value="NDK-like_dom_sf"/>
</dbReference>
<dbReference type="InterPro" id="IPR011410">
    <property type="entry name" value="NDPK7"/>
</dbReference>
<dbReference type="InterPro" id="IPR035525">
    <property type="entry name" value="NDPk7A"/>
</dbReference>
<dbReference type="InterPro" id="IPR037993">
    <property type="entry name" value="NDPk7B"/>
</dbReference>
<dbReference type="InterPro" id="IPR001564">
    <property type="entry name" value="Nucleoside_diP_kinase"/>
</dbReference>
<dbReference type="PANTHER" id="PTHR43109">
    <property type="entry name" value="NUCLEOSIDE DIPHOSPHATE KINASE 7"/>
    <property type="match status" value="1"/>
</dbReference>
<dbReference type="PANTHER" id="PTHR43109:SF2">
    <property type="entry name" value="NUCLEOSIDE DIPHOSPHATE KINASE 7"/>
    <property type="match status" value="1"/>
</dbReference>
<dbReference type="Pfam" id="PF00334">
    <property type="entry name" value="NDK"/>
    <property type="match status" value="2"/>
</dbReference>
<dbReference type="Pfam" id="PF25364">
    <property type="entry name" value="PH_NDK7_N"/>
    <property type="match status" value="1"/>
</dbReference>
<dbReference type="PIRSF" id="PIRSF036503">
    <property type="entry name" value="NDK7"/>
    <property type="match status" value="1"/>
</dbReference>
<dbReference type="PRINTS" id="PR01243">
    <property type="entry name" value="NUCDPKINASE"/>
</dbReference>
<dbReference type="SMART" id="SM00676">
    <property type="entry name" value="DM10"/>
    <property type="match status" value="1"/>
</dbReference>
<dbReference type="SMART" id="SM00562">
    <property type="entry name" value="NDK"/>
    <property type="match status" value="2"/>
</dbReference>
<dbReference type="SUPFAM" id="SSF54919">
    <property type="entry name" value="Nucleoside diphosphate kinase, NDK"/>
    <property type="match status" value="2"/>
</dbReference>
<dbReference type="PROSITE" id="PS51336">
    <property type="entry name" value="DM10"/>
    <property type="match status" value="1"/>
</dbReference>
<dbReference type="PROSITE" id="PS51374">
    <property type="entry name" value="NDPK_LIKE"/>
    <property type="match status" value="2"/>
</dbReference>
<sequence length="376" mass="42492">MNHSERFVFIAEWYDPNASLLRRYELLFYPGDGSVEMHDVKNHRTFLKRTKYDNLHLEDLFIGNKVNVFSRQLVLIDYGDQYTARQLGSRKEKTLALIKPDAISKAGEIIEIINKAGFTITKLKMMMLSRKEALDFHVDHQSRPFFNELIQFITTGPIIAMEILRDDAICEWKRLLGPANSGVARTDASESIRALFGTDGIRNAAHGPDSFASAAREMELFFPSSGGCGPANTAKFTNCTCCIVKPHAVSEGLLGKILMAIRDAGFEISAMQMFNMDRVNVEEFYEVYKGVVTEYHDMVTEMYSGPCVAMEIQQNNATKTFREFCGPADPEIARHLRPGTLRAIFGKTKIQNAVHCTDLPEDGLLEVQYFFKILDN</sequence>
<name>NDK7_HUMAN</name>
<protein>
    <recommendedName>
        <fullName>Nucleoside diphosphate kinase homolog 7</fullName>
        <shortName>NDK 7</shortName>
        <shortName>NDP kinase homolog 7</shortName>
    </recommendedName>
    <alternativeName>
        <fullName>3'-5' exonuclease NME7</fullName>
        <ecNumber evidence="4">3.1.-.-</ecNumber>
    </alternativeName>
    <alternativeName>
        <fullName evidence="11">Protein kinase NME7</fullName>
        <ecNumber evidence="5">2.7.-.-</ecNumber>
    </alternativeName>
    <alternativeName>
        <fullName evidence="10">nm23-H7</fullName>
    </alternativeName>
</protein>
<gene>
    <name evidence="12" type="primary">NME7</name>
</gene>
<organism>
    <name type="scientific">Homo sapiens</name>
    <name type="common">Human</name>
    <dbReference type="NCBI Taxonomy" id="9606"/>
    <lineage>
        <taxon>Eukaryota</taxon>
        <taxon>Metazoa</taxon>
        <taxon>Chordata</taxon>
        <taxon>Craniata</taxon>
        <taxon>Vertebrata</taxon>
        <taxon>Euteleostomi</taxon>
        <taxon>Mammalia</taxon>
        <taxon>Eutheria</taxon>
        <taxon>Euarchontoglires</taxon>
        <taxon>Primates</taxon>
        <taxon>Haplorrhini</taxon>
        <taxon>Catarrhini</taxon>
        <taxon>Hominidae</taxon>
        <taxon>Homo</taxon>
    </lineage>
</organism>
<accession>Q9Y5B8</accession>
<accession>A8K3T6</accession>
<accession>A8MY09</accession>
<accession>B3KSW9</accession>
<accession>Q5TGZ4</accession>
<evidence type="ECO:0000250" key="1">
    <source>
        <dbReference type="UniProtKB" id="Q5E9Y9"/>
    </source>
</evidence>
<evidence type="ECO:0000250" key="2">
    <source>
        <dbReference type="UniProtKB" id="Q9QXL8"/>
    </source>
</evidence>
<evidence type="ECO:0000255" key="3">
    <source>
        <dbReference type="PROSITE-ProRule" id="PRU00665"/>
    </source>
</evidence>
<evidence type="ECO:0000269" key="4">
    <source>
    </source>
</evidence>
<evidence type="ECO:0000269" key="5">
    <source>
    </source>
</evidence>
<evidence type="ECO:0000269" key="6">
    <source>
    </source>
</evidence>
<evidence type="ECO:0000269" key="7">
    <source>
    </source>
</evidence>
<evidence type="ECO:0000269" key="8">
    <source>
    </source>
</evidence>
<evidence type="ECO:0000303" key="9">
    <source>
    </source>
</evidence>
<evidence type="ECO:0000303" key="10">
    <source ref="1"/>
</evidence>
<evidence type="ECO:0000305" key="11"/>
<evidence type="ECO:0000312" key="12">
    <source>
        <dbReference type="HGNC" id="HGNC:20461"/>
    </source>
</evidence>
<evidence type="ECO:0007744" key="13">
    <source>
        <dbReference type="PDB" id="7UNG"/>
    </source>
</evidence>
<evidence type="ECO:0007744" key="14">
    <source>
        <dbReference type="PDB" id="8J07"/>
    </source>
</evidence>